<protein>
    <recommendedName>
        <fullName evidence="5">U-actitoxin-Avd3h</fullName>
        <shortName evidence="5">U-AITX-Avd3h</shortName>
    </recommendedName>
    <alternativeName>
        <fullName evidence="4">AsKC5</fullName>
    </alternativeName>
</protein>
<accession>P0DN09</accession>
<organism>
    <name type="scientific">Anemonia viridis</name>
    <name type="common">Snakelocks anemone</name>
    <dbReference type="NCBI Taxonomy" id="51769"/>
    <lineage>
        <taxon>Eukaryota</taxon>
        <taxon>Metazoa</taxon>
        <taxon>Cnidaria</taxon>
        <taxon>Anthozoa</taxon>
        <taxon>Hexacorallia</taxon>
        <taxon>Actiniaria</taxon>
        <taxon>Actiniidae</taxon>
        <taxon>Anemonia</taxon>
    </lineage>
</organism>
<comment type="function">
    <text evidence="2">Dual-function toxin that inhibits both the serine protease trypsin (Kd=30 nM) and voltage-gated potassium channels Kv1.2/KCNA2 (IC(50)=2800 nM).</text>
</comment>
<comment type="subcellular location">
    <subcellularLocation>
        <location evidence="6">Secreted</location>
    </subcellularLocation>
    <subcellularLocation>
        <location evidence="6">Nematocyst</location>
    </subcellularLocation>
</comment>
<comment type="similarity">
    <text evidence="6">Belongs to the venom Kunitz-type family. Sea anemone type 2 potassium channel toxin subfamily.</text>
</comment>
<comment type="caution">
    <text evidence="6">Opinions are divided on whether Anemonia viridis (Forsskal, 1775) and Anemonia sulcata (Pennant, 1777) are separate species.</text>
</comment>
<feature type="signal peptide" evidence="2">
    <location>
        <begin position="1"/>
        <end position="16"/>
    </location>
</feature>
<feature type="chain" id="PRO_0000433757" description="U-actitoxin-Avd3h">
    <location>
        <begin position="17"/>
        <end position="75"/>
    </location>
</feature>
<feature type="propeptide" id="PRO_0000433758" evidence="7">
    <location>
        <begin position="76"/>
        <end position="82"/>
    </location>
</feature>
<feature type="domain" description="BPTI/Kunitz inhibitor" evidence="3">
    <location>
        <begin position="21"/>
        <end position="71"/>
    </location>
</feature>
<feature type="site" description="Reactive bond for trypsin" evidence="1">
    <location>
        <begin position="31"/>
        <end position="32"/>
    </location>
</feature>
<feature type="disulfide bond" evidence="3">
    <location>
        <begin position="21"/>
        <end position="71"/>
    </location>
</feature>
<feature type="disulfide bond" evidence="3">
    <location>
        <begin position="30"/>
        <end position="54"/>
    </location>
</feature>
<feature type="disulfide bond" evidence="3">
    <location>
        <begin position="46"/>
        <end position="67"/>
    </location>
</feature>
<evidence type="ECO:0000250" key="1"/>
<evidence type="ECO:0000250" key="2">
    <source>
        <dbReference type="UniProtKB" id="Q9TWG0"/>
    </source>
</evidence>
<evidence type="ECO:0000255" key="3">
    <source>
        <dbReference type="PROSITE-ProRule" id="PRU00031"/>
    </source>
</evidence>
<evidence type="ECO:0000303" key="4">
    <source>
    </source>
</evidence>
<evidence type="ECO:0000303" key="5">
    <source>
    </source>
</evidence>
<evidence type="ECO:0000305" key="6"/>
<evidence type="ECO:0000305" key="7">
    <source>
    </source>
</evidence>
<dbReference type="EMBL" id="FK731360">
    <property type="status" value="NOT_ANNOTATED_CDS"/>
    <property type="molecule type" value="mRNA"/>
</dbReference>
<dbReference type="EMBL" id="FK744399">
    <property type="status" value="NOT_ANNOTATED_CDS"/>
    <property type="molecule type" value="mRNA"/>
</dbReference>
<dbReference type="EMBL" id="FK727999">
    <property type="status" value="NOT_ANNOTATED_CDS"/>
    <property type="molecule type" value="mRNA"/>
</dbReference>
<dbReference type="EMBL" id="FK723059">
    <property type="status" value="NOT_ANNOTATED_CDS"/>
    <property type="molecule type" value="mRNA"/>
</dbReference>
<dbReference type="SMR" id="P0DN09"/>
<dbReference type="GO" id="GO:0005576">
    <property type="term" value="C:extracellular region"/>
    <property type="evidence" value="ECO:0007669"/>
    <property type="project" value="UniProtKB-SubCell"/>
</dbReference>
<dbReference type="GO" id="GO:0042151">
    <property type="term" value="C:nematocyst"/>
    <property type="evidence" value="ECO:0007669"/>
    <property type="project" value="UniProtKB-SubCell"/>
</dbReference>
<dbReference type="GO" id="GO:0015459">
    <property type="term" value="F:potassium channel regulator activity"/>
    <property type="evidence" value="ECO:0007669"/>
    <property type="project" value="UniProtKB-KW"/>
</dbReference>
<dbReference type="GO" id="GO:0004867">
    <property type="term" value="F:serine-type endopeptidase inhibitor activity"/>
    <property type="evidence" value="ECO:0007669"/>
    <property type="project" value="UniProtKB-KW"/>
</dbReference>
<dbReference type="GO" id="GO:0090729">
    <property type="term" value="F:toxin activity"/>
    <property type="evidence" value="ECO:0007669"/>
    <property type="project" value="UniProtKB-KW"/>
</dbReference>
<dbReference type="CDD" id="cd22633">
    <property type="entry name" value="Kunitz_actitoxin-like"/>
    <property type="match status" value="1"/>
</dbReference>
<dbReference type="FunFam" id="4.10.410.10:FF:000021">
    <property type="entry name" value="Serine protease inhibitor, putative"/>
    <property type="match status" value="1"/>
</dbReference>
<dbReference type="Gene3D" id="4.10.410.10">
    <property type="entry name" value="Pancreatic trypsin inhibitor Kunitz domain"/>
    <property type="match status" value="1"/>
</dbReference>
<dbReference type="InterPro" id="IPR002223">
    <property type="entry name" value="Kunitz_BPTI"/>
</dbReference>
<dbReference type="InterPro" id="IPR036880">
    <property type="entry name" value="Kunitz_BPTI_sf"/>
</dbReference>
<dbReference type="InterPro" id="IPR020901">
    <property type="entry name" value="Prtase_inh_Kunz-CS"/>
</dbReference>
<dbReference type="InterPro" id="IPR050098">
    <property type="entry name" value="TFPI/VKTCI-like"/>
</dbReference>
<dbReference type="PANTHER" id="PTHR10083:SF374">
    <property type="entry name" value="BPTI_KUNITZ INHIBITOR DOMAIN-CONTAINING PROTEIN"/>
    <property type="match status" value="1"/>
</dbReference>
<dbReference type="PANTHER" id="PTHR10083">
    <property type="entry name" value="KUNITZ-TYPE PROTEASE INHIBITOR-RELATED"/>
    <property type="match status" value="1"/>
</dbReference>
<dbReference type="Pfam" id="PF00014">
    <property type="entry name" value="Kunitz_BPTI"/>
    <property type="match status" value="1"/>
</dbReference>
<dbReference type="PRINTS" id="PR00759">
    <property type="entry name" value="BASICPTASE"/>
</dbReference>
<dbReference type="SMART" id="SM00131">
    <property type="entry name" value="KU"/>
    <property type="match status" value="1"/>
</dbReference>
<dbReference type="SUPFAM" id="SSF57362">
    <property type="entry name" value="BPTI-like"/>
    <property type="match status" value="1"/>
</dbReference>
<dbReference type="PROSITE" id="PS00280">
    <property type="entry name" value="BPTI_KUNITZ_1"/>
    <property type="match status" value="1"/>
</dbReference>
<dbReference type="PROSITE" id="PS50279">
    <property type="entry name" value="BPTI_KUNITZ_2"/>
    <property type="match status" value="1"/>
</dbReference>
<keyword id="KW-1015">Disulfide bond</keyword>
<keyword id="KW-0872">Ion channel impairing toxin</keyword>
<keyword id="KW-0166">Nematocyst</keyword>
<keyword id="KW-0632">Potassium channel impairing toxin</keyword>
<keyword id="KW-0646">Protease inhibitor</keyword>
<keyword id="KW-0964">Secreted</keyword>
<keyword id="KW-0722">Serine protease inhibitor</keyword>
<keyword id="KW-0732">Signal</keyword>
<keyword id="KW-0800">Toxin</keyword>
<keyword id="KW-1220">Voltage-gated potassium channel impairing toxin</keyword>
<proteinExistence type="inferred from homology"/>
<name>VKT5_ANEVI</name>
<sequence>MVFLLCFFLVADVSYGINGDCELPKVVGPCRARFPRYYYNSSSKRCEKFIYGGCRGNANNFHTLEECEKVCGVRSRDSPKEN</sequence>
<reference key="1">
    <citation type="journal article" date="2009" name="BMC Genomics">
        <title>Comprehensive EST analysis of the symbiotic sea anemone, Anemonia viridis.</title>
        <authorList>
            <person name="Sabourault C."/>
            <person name="Ganot P."/>
            <person name="Deleury E."/>
            <person name="Allemand D."/>
            <person name="Furla P."/>
        </authorList>
    </citation>
    <scope>NUCLEOTIDE SEQUENCE [MRNA]</scope>
</reference>
<reference key="2">
    <citation type="journal article" date="2011" name="BMC Genomics">
        <title>The mining of toxin-like polypeptides from EST database by single residue distribution analysis.</title>
        <authorList>
            <person name="Kozlov S."/>
            <person name="Grishin E."/>
        </authorList>
    </citation>
    <scope>NOMENCLATURE</scope>
</reference>
<reference key="3">
    <citation type="journal article" date="2012" name="Toxicon">
        <title>Development of a rational nomenclature for naming peptide and protein toxins from sea anemones.</title>
        <authorList>
            <person name="Oliveira J.S."/>
            <person name="Fuentes-Silva D."/>
            <person name="King G.F."/>
        </authorList>
    </citation>
    <scope>NOMENCLATURE</scope>
</reference>